<evidence type="ECO:0000250" key="1"/>
<evidence type="ECO:0000255" key="2">
    <source>
        <dbReference type="PROSITE-ProRule" id="PRU00541"/>
    </source>
</evidence>
<evidence type="ECO:0000255" key="3">
    <source>
        <dbReference type="PROSITE-ProRule" id="PRU00542"/>
    </source>
</evidence>
<evidence type="ECO:0000256" key="4">
    <source>
        <dbReference type="SAM" id="MobiDB-lite"/>
    </source>
</evidence>
<evidence type="ECO:0000305" key="5"/>
<protein>
    <recommendedName>
        <fullName>ATP-dependent RNA helicase dbp2</fullName>
        <ecNumber>3.6.4.13</ecNumber>
    </recommendedName>
    <alternativeName>
        <fullName>p68-like protein</fullName>
    </alternativeName>
</protein>
<sequence>MSYRDNEYSGNYNGKEDGYNSRGRYGGGYRNNYSRGGGRGGFNDGASYGYDQRGQGRNFYESDGPGANLVKKDWKNETLIPFQKDFYKEHENVRNRSDAEVTEYRKEKEIVVHGLNVPKPVTTFEEAGFPNYVLKEVKQLGFEAPTPIQQQAWPMAMSGRDMVGISATGSGKTLSYCLPAIVHINAQPLLSPGDGPIVLVLAPTRELAVQIQQECTKFGKSSRIRNTCVYGGVPRGPQIRDLIRGVEICIATPGRLLDMLDSNKTNLRRVTYLVLDEADRMLDMGFEPQIRKIVDQIRPDRQTVMFSATWPKEVQRLARDYLNDYIQVTVGSLDLAASHNIKQIVEVVDNADKRARLGKDIEEVLKDRDNKVLIFTGTKRVADDITRFLRQDGWPALAIHGDKAQDERDWVLNEFRTGKSPIMVATDVASRGIDVKGITHVFNYDFPGNTEDYVHRIGRTGRAGAKGTAYTYFTSDNAKQARELVSILSEAKQDIDPKLEEMARYSSGGRGGNYRRGGYGRGGFRRGGGYGNRNRGFTGSNSAPLARSRW</sequence>
<name>DBP2_SCHPO</name>
<feature type="chain" id="PRO_0000054998" description="ATP-dependent RNA helicase dbp2">
    <location>
        <begin position="1"/>
        <end position="550"/>
    </location>
</feature>
<feature type="domain" description="Helicase ATP-binding" evidence="2">
    <location>
        <begin position="153"/>
        <end position="328"/>
    </location>
</feature>
<feature type="domain" description="Helicase C-terminal" evidence="3">
    <location>
        <begin position="340"/>
        <end position="503"/>
    </location>
</feature>
<feature type="region of interest" description="Disordered" evidence="4">
    <location>
        <begin position="1"/>
        <end position="25"/>
    </location>
</feature>
<feature type="region of interest" description="RNA-binding RGG-box">
    <location>
        <begin position="510"/>
        <end position="533"/>
    </location>
</feature>
<feature type="region of interest" description="Disordered" evidence="4">
    <location>
        <begin position="525"/>
        <end position="550"/>
    </location>
</feature>
<feature type="short sequence motif" description="Q motif">
    <location>
        <begin position="122"/>
        <end position="150"/>
    </location>
</feature>
<feature type="short sequence motif" description="DEAD box">
    <location>
        <begin position="276"/>
        <end position="279"/>
    </location>
</feature>
<feature type="binding site" evidence="2">
    <location>
        <begin position="166"/>
        <end position="173"/>
    </location>
    <ligand>
        <name>ATP</name>
        <dbReference type="ChEBI" id="CHEBI:30616"/>
    </ligand>
</feature>
<feature type="sequence conflict" description="In Ref. 1; CAA36873." evidence="5" ref="1">
    <original>R</original>
    <variation>L</variation>
    <location>
        <position position="235"/>
    </location>
</feature>
<feature type="sequence conflict" description="In Ref. 1; CAA36873." evidence="5" ref="1">
    <original>R</original>
    <variation>L</variation>
    <location>
        <position position="240"/>
    </location>
</feature>
<gene>
    <name type="primary">dbp2</name>
    <name type="ORF">SPBP8B7.16c</name>
</gene>
<comment type="function">
    <text evidence="1">ATP-dependent RNA helicase involved nonsense-mediated mRNA decay and ribosome biogenesis through rRNA processing.</text>
</comment>
<comment type="catalytic activity">
    <reaction>
        <text>ATP + H2O = ADP + phosphate + H(+)</text>
        <dbReference type="Rhea" id="RHEA:13065"/>
        <dbReference type="ChEBI" id="CHEBI:15377"/>
        <dbReference type="ChEBI" id="CHEBI:15378"/>
        <dbReference type="ChEBI" id="CHEBI:30616"/>
        <dbReference type="ChEBI" id="CHEBI:43474"/>
        <dbReference type="ChEBI" id="CHEBI:456216"/>
        <dbReference type="EC" id="3.6.4.13"/>
    </reaction>
</comment>
<comment type="subunit">
    <text evidence="1">Associates with polysomes.</text>
</comment>
<comment type="subcellular location">
    <subcellularLocation>
        <location evidence="1">Cytoplasm</location>
    </subcellularLocation>
    <subcellularLocation>
        <location evidence="1">Nucleus</location>
    </subcellularLocation>
</comment>
<comment type="domain">
    <text>The Q motif is unique to and characteristic of the DEAD box family of RNA helicases and controls ATP binding and hydrolysis.</text>
</comment>
<comment type="similarity">
    <text evidence="5">Belongs to the DEAD box helicase family. DDX5/DBP2 subfamily.</text>
</comment>
<accession>P24782</accession>
<reference key="1">
    <citation type="journal article" date="1991" name="Mol. Cell. Biol.">
        <title>p68 RNA helicase: identification of a nucleolar form and cloning of related genes containing a conserved intron in yeasts.</title>
        <authorList>
            <person name="Iggo R.D."/>
            <person name="Jamieson D.J."/>
            <person name="McNeill S.A."/>
            <person name="Southgate J."/>
            <person name="McPheat J."/>
            <person name="Lane D.P."/>
        </authorList>
    </citation>
    <scope>NUCLEOTIDE SEQUENCE [GENOMIC DNA / MRNA]</scope>
</reference>
<reference key="2">
    <citation type="journal article" date="2002" name="Nature">
        <title>The genome sequence of Schizosaccharomyces pombe.</title>
        <authorList>
            <person name="Wood V."/>
            <person name="Gwilliam R."/>
            <person name="Rajandream M.A."/>
            <person name="Lyne M.H."/>
            <person name="Lyne R."/>
            <person name="Stewart A."/>
            <person name="Sgouros J.G."/>
            <person name="Peat N."/>
            <person name="Hayles J."/>
            <person name="Baker S.G."/>
            <person name="Basham D."/>
            <person name="Bowman S."/>
            <person name="Brooks K."/>
            <person name="Brown D."/>
            <person name="Brown S."/>
            <person name="Chillingworth T."/>
            <person name="Churcher C.M."/>
            <person name="Collins M."/>
            <person name="Connor R."/>
            <person name="Cronin A."/>
            <person name="Davis P."/>
            <person name="Feltwell T."/>
            <person name="Fraser A."/>
            <person name="Gentles S."/>
            <person name="Goble A."/>
            <person name="Hamlin N."/>
            <person name="Harris D.E."/>
            <person name="Hidalgo J."/>
            <person name="Hodgson G."/>
            <person name="Holroyd S."/>
            <person name="Hornsby T."/>
            <person name="Howarth S."/>
            <person name="Huckle E.J."/>
            <person name="Hunt S."/>
            <person name="Jagels K."/>
            <person name="James K.D."/>
            <person name="Jones L."/>
            <person name="Jones M."/>
            <person name="Leather S."/>
            <person name="McDonald S."/>
            <person name="McLean J."/>
            <person name="Mooney P."/>
            <person name="Moule S."/>
            <person name="Mungall K.L."/>
            <person name="Murphy L.D."/>
            <person name="Niblett D."/>
            <person name="Odell C."/>
            <person name="Oliver K."/>
            <person name="O'Neil S."/>
            <person name="Pearson D."/>
            <person name="Quail M.A."/>
            <person name="Rabbinowitsch E."/>
            <person name="Rutherford K.M."/>
            <person name="Rutter S."/>
            <person name="Saunders D."/>
            <person name="Seeger K."/>
            <person name="Sharp S."/>
            <person name="Skelton J."/>
            <person name="Simmonds M.N."/>
            <person name="Squares R."/>
            <person name="Squares S."/>
            <person name="Stevens K."/>
            <person name="Taylor K."/>
            <person name="Taylor R.G."/>
            <person name="Tivey A."/>
            <person name="Walsh S.V."/>
            <person name="Warren T."/>
            <person name="Whitehead S."/>
            <person name="Woodward J.R."/>
            <person name="Volckaert G."/>
            <person name="Aert R."/>
            <person name="Robben J."/>
            <person name="Grymonprez B."/>
            <person name="Weltjens I."/>
            <person name="Vanstreels E."/>
            <person name="Rieger M."/>
            <person name="Schaefer M."/>
            <person name="Mueller-Auer S."/>
            <person name="Gabel C."/>
            <person name="Fuchs M."/>
            <person name="Duesterhoeft A."/>
            <person name="Fritzc C."/>
            <person name="Holzer E."/>
            <person name="Moestl D."/>
            <person name="Hilbert H."/>
            <person name="Borzym K."/>
            <person name="Langer I."/>
            <person name="Beck A."/>
            <person name="Lehrach H."/>
            <person name="Reinhardt R."/>
            <person name="Pohl T.M."/>
            <person name="Eger P."/>
            <person name="Zimmermann W."/>
            <person name="Wedler H."/>
            <person name="Wambutt R."/>
            <person name="Purnelle B."/>
            <person name="Goffeau A."/>
            <person name="Cadieu E."/>
            <person name="Dreano S."/>
            <person name="Gloux S."/>
            <person name="Lelaure V."/>
            <person name="Mottier S."/>
            <person name="Galibert F."/>
            <person name="Aves S.J."/>
            <person name="Xiang Z."/>
            <person name="Hunt C."/>
            <person name="Moore K."/>
            <person name="Hurst S.M."/>
            <person name="Lucas M."/>
            <person name="Rochet M."/>
            <person name="Gaillardin C."/>
            <person name="Tallada V.A."/>
            <person name="Garzon A."/>
            <person name="Thode G."/>
            <person name="Daga R.R."/>
            <person name="Cruzado L."/>
            <person name="Jimenez J."/>
            <person name="Sanchez M."/>
            <person name="del Rey F."/>
            <person name="Benito J."/>
            <person name="Dominguez A."/>
            <person name="Revuelta J.L."/>
            <person name="Moreno S."/>
            <person name="Armstrong J."/>
            <person name="Forsburg S.L."/>
            <person name="Cerutti L."/>
            <person name="Lowe T."/>
            <person name="McCombie W.R."/>
            <person name="Paulsen I."/>
            <person name="Potashkin J."/>
            <person name="Shpakovski G.V."/>
            <person name="Ussery D."/>
            <person name="Barrell B.G."/>
            <person name="Nurse P."/>
        </authorList>
    </citation>
    <scope>NUCLEOTIDE SEQUENCE [LARGE SCALE GENOMIC DNA]</scope>
    <source>
        <strain>972 / ATCC 24843</strain>
    </source>
</reference>
<proteinExistence type="evidence at transcript level"/>
<organism>
    <name type="scientific">Schizosaccharomyces pombe (strain 972 / ATCC 24843)</name>
    <name type="common">Fission yeast</name>
    <dbReference type="NCBI Taxonomy" id="284812"/>
    <lineage>
        <taxon>Eukaryota</taxon>
        <taxon>Fungi</taxon>
        <taxon>Dikarya</taxon>
        <taxon>Ascomycota</taxon>
        <taxon>Taphrinomycotina</taxon>
        <taxon>Schizosaccharomycetes</taxon>
        <taxon>Schizosaccharomycetales</taxon>
        <taxon>Schizosaccharomycetaceae</taxon>
        <taxon>Schizosaccharomyces</taxon>
    </lineage>
</organism>
<dbReference type="EC" id="3.6.4.13"/>
<dbReference type="EMBL" id="X52648">
    <property type="protein sequence ID" value="CAA36873.1"/>
    <property type="molecule type" value="Genomic_DNA"/>
</dbReference>
<dbReference type="EMBL" id="L11574">
    <property type="protein sequence ID" value="AAA35319.1"/>
    <property type="molecule type" value="mRNA"/>
</dbReference>
<dbReference type="EMBL" id="CU329671">
    <property type="protein sequence ID" value="CAA21801.1"/>
    <property type="molecule type" value="Genomic_DNA"/>
</dbReference>
<dbReference type="PIR" id="T40810">
    <property type="entry name" value="S14048"/>
</dbReference>
<dbReference type="RefSeq" id="NP_596523.1">
    <property type="nucleotide sequence ID" value="NM_001022444.2"/>
</dbReference>
<dbReference type="SMR" id="P24782"/>
<dbReference type="BioGRID" id="277894">
    <property type="interactions" value="9"/>
</dbReference>
<dbReference type="FunCoup" id="P24782">
    <property type="interactions" value="810"/>
</dbReference>
<dbReference type="IntAct" id="P24782">
    <property type="interactions" value="1"/>
</dbReference>
<dbReference type="STRING" id="284812.P24782"/>
<dbReference type="iPTMnet" id="P24782"/>
<dbReference type="PaxDb" id="4896-SPBP8B7.16c.1"/>
<dbReference type="EnsemblFungi" id="SPBP8B7.16c.1">
    <property type="protein sequence ID" value="SPBP8B7.16c.1:pep"/>
    <property type="gene ID" value="SPBP8B7.16c"/>
</dbReference>
<dbReference type="GeneID" id="2541383"/>
<dbReference type="KEGG" id="spo:2541383"/>
<dbReference type="PomBase" id="SPBP8B7.16c">
    <property type="gene designation" value="dbp2"/>
</dbReference>
<dbReference type="VEuPathDB" id="FungiDB:SPBP8B7.16c"/>
<dbReference type="eggNOG" id="KOG0331">
    <property type="taxonomic scope" value="Eukaryota"/>
</dbReference>
<dbReference type="HOGENOM" id="CLU_003041_16_9_1"/>
<dbReference type="InParanoid" id="P24782"/>
<dbReference type="OMA" id="STMPKFE"/>
<dbReference type="PhylomeDB" id="P24782"/>
<dbReference type="Reactome" id="R-SPO-3899300">
    <property type="pathway name" value="SUMOylation of transcription cofactors"/>
</dbReference>
<dbReference type="Reactome" id="R-SPO-72163">
    <property type="pathway name" value="mRNA Splicing - Major Pathway"/>
</dbReference>
<dbReference type="Reactome" id="R-SPO-9018519">
    <property type="pathway name" value="Estrogen-dependent gene expression"/>
</dbReference>
<dbReference type="PRO" id="PR:P24782"/>
<dbReference type="Proteomes" id="UP000002485">
    <property type="component" value="Chromosome II"/>
</dbReference>
<dbReference type="GO" id="GO:0005737">
    <property type="term" value="C:cytoplasm"/>
    <property type="evidence" value="ECO:0000318"/>
    <property type="project" value="GO_Central"/>
</dbReference>
<dbReference type="GO" id="GO:0005829">
    <property type="term" value="C:cytosol"/>
    <property type="evidence" value="ECO:0007005"/>
    <property type="project" value="PomBase"/>
</dbReference>
<dbReference type="GO" id="GO:0005730">
    <property type="term" value="C:nucleolus"/>
    <property type="evidence" value="ECO:0007005"/>
    <property type="project" value="PomBase"/>
</dbReference>
<dbReference type="GO" id="GO:0005634">
    <property type="term" value="C:nucleus"/>
    <property type="evidence" value="ECO:0007005"/>
    <property type="project" value="PomBase"/>
</dbReference>
<dbReference type="GO" id="GO:1990904">
    <property type="term" value="C:ribonucleoprotein complex"/>
    <property type="evidence" value="ECO:0000318"/>
    <property type="project" value="GO_Central"/>
</dbReference>
<dbReference type="GO" id="GO:0005524">
    <property type="term" value="F:ATP binding"/>
    <property type="evidence" value="ECO:0000250"/>
    <property type="project" value="PomBase"/>
</dbReference>
<dbReference type="GO" id="GO:0016887">
    <property type="term" value="F:ATP hydrolysis activity"/>
    <property type="evidence" value="ECO:0007669"/>
    <property type="project" value="RHEA"/>
</dbReference>
<dbReference type="GO" id="GO:0003729">
    <property type="term" value="F:mRNA binding"/>
    <property type="evidence" value="ECO:0000318"/>
    <property type="project" value="GO_Central"/>
</dbReference>
<dbReference type="GO" id="GO:0003724">
    <property type="term" value="F:RNA helicase activity"/>
    <property type="evidence" value="ECO:0000318"/>
    <property type="project" value="GO_Central"/>
</dbReference>
<dbReference type="GO" id="GO:0000380">
    <property type="term" value="P:alternative mRNA splicing, via spliceosome"/>
    <property type="evidence" value="ECO:0000318"/>
    <property type="project" value="GO_Central"/>
</dbReference>
<dbReference type="GO" id="GO:0000184">
    <property type="term" value="P:nuclear-transcribed mRNA catabolic process, nonsense-mediated decay"/>
    <property type="evidence" value="ECO:0000266"/>
    <property type="project" value="PomBase"/>
</dbReference>
<dbReference type="GO" id="GO:0006364">
    <property type="term" value="P:rRNA processing"/>
    <property type="evidence" value="ECO:0000318"/>
    <property type="project" value="GO_Central"/>
</dbReference>
<dbReference type="CDD" id="cd17966">
    <property type="entry name" value="DEADc_DDX5_DDX17"/>
    <property type="match status" value="1"/>
</dbReference>
<dbReference type="CDD" id="cd18787">
    <property type="entry name" value="SF2_C_DEAD"/>
    <property type="match status" value="1"/>
</dbReference>
<dbReference type="FunFam" id="3.40.50.300:FF:000008">
    <property type="entry name" value="ATP-dependent RNA helicase RhlB"/>
    <property type="match status" value="1"/>
</dbReference>
<dbReference type="FunFam" id="3.40.50.300:FF:000079">
    <property type="entry name" value="probable ATP-dependent RNA helicase DDX17"/>
    <property type="match status" value="1"/>
</dbReference>
<dbReference type="Gene3D" id="3.40.50.300">
    <property type="entry name" value="P-loop containing nucleotide triphosphate hydrolases"/>
    <property type="match status" value="2"/>
</dbReference>
<dbReference type="InterPro" id="IPR011545">
    <property type="entry name" value="DEAD/DEAH_box_helicase_dom"/>
</dbReference>
<dbReference type="InterPro" id="IPR014001">
    <property type="entry name" value="Helicase_ATP-bd"/>
</dbReference>
<dbReference type="InterPro" id="IPR001650">
    <property type="entry name" value="Helicase_C-like"/>
</dbReference>
<dbReference type="InterPro" id="IPR027417">
    <property type="entry name" value="P-loop_NTPase"/>
</dbReference>
<dbReference type="InterPro" id="IPR000629">
    <property type="entry name" value="RNA-helicase_DEAD-box_CS"/>
</dbReference>
<dbReference type="InterPro" id="IPR014014">
    <property type="entry name" value="RNA_helicase_DEAD_Q_motif"/>
</dbReference>
<dbReference type="PANTHER" id="PTHR47958">
    <property type="entry name" value="ATP-DEPENDENT RNA HELICASE DBP3"/>
    <property type="match status" value="1"/>
</dbReference>
<dbReference type="Pfam" id="PF00270">
    <property type="entry name" value="DEAD"/>
    <property type="match status" value="1"/>
</dbReference>
<dbReference type="Pfam" id="PF00271">
    <property type="entry name" value="Helicase_C"/>
    <property type="match status" value="1"/>
</dbReference>
<dbReference type="SMART" id="SM00487">
    <property type="entry name" value="DEXDc"/>
    <property type="match status" value="1"/>
</dbReference>
<dbReference type="SMART" id="SM00490">
    <property type="entry name" value="HELICc"/>
    <property type="match status" value="1"/>
</dbReference>
<dbReference type="SUPFAM" id="SSF52540">
    <property type="entry name" value="P-loop containing nucleoside triphosphate hydrolases"/>
    <property type="match status" value="1"/>
</dbReference>
<dbReference type="PROSITE" id="PS00039">
    <property type="entry name" value="DEAD_ATP_HELICASE"/>
    <property type="match status" value="1"/>
</dbReference>
<dbReference type="PROSITE" id="PS51192">
    <property type="entry name" value="HELICASE_ATP_BIND_1"/>
    <property type="match status" value="1"/>
</dbReference>
<dbReference type="PROSITE" id="PS51194">
    <property type="entry name" value="HELICASE_CTER"/>
    <property type="match status" value="1"/>
</dbReference>
<dbReference type="PROSITE" id="PS51195">
    <property type="entry name" value="Q_MOTIF"/>
    <property type="match status" value="1"/>
</dbReference>
<keyword id="KW-0067">ATP-binding</keyword>
<keyword id="KW-0963">Cytoplasm</keyword>
<keyword id="KW-0347">Helicase</keyword>
<keyword id="KW-0378">Hydrolase</keyword>
<keyword id="KW-0866">Nonsense-mediated mRNA decay</keyword>
<keyword id="KW-0547">Nucleotide-binding</keyword>
<keyword id="KW-0539">Nucleus</keyword>
<keyword id="KW-1185">Reference proteome</keyword>
<keyword id="KW-0690">Ribosome biogenesis</keyword>
<keyword id="KW-0694">RNA-binding</keyword>
<keyword id="KW-0698">rRNA processing</keyword>